<proteinExistence type="inferred from homology"/>
<sequence>MRRTLYRLMIELTNGRFTSYILRKFAQSRLSSIIIPSYAKVFQINQDEMEKGLKEYRTLHELFTRKLKEGKRSIDTDASSIVSPVDGVFADHGPIEETKTFDIKGKRYSIVDMLGNEERAQRYAGGTYMVIYLSPSHYHRIHSPLSGSVTERFVLGRKSYPVNAAGMEYGKEPLSKNYRSVTEVNSDGEHMALVKVGAMFVNSIELLHERDTVQKGEEMAYFTFGSTVVLLFEKDMIEVVQELKSGQELRLGEKIATRLAHK</sequence>
<gene>
    <name evidence="1" type="primary">psd</name>
    <name type="ordered locus">BCE_4419</name>
</gene>
<reference key="1">
    <citation type="journal article" date="2004" name="Nucleic Acids Res.">
        <title>The genome sequence of Bacillus cereus ATCC 10987 reveals metabolic adaptations and a large plasmid related to Bacillus anthracis pXO1.</title>
        <authorList>
            <person name="Rasko D.A."/>
            <person name="Ravel J."/>
            <person name="Oekstad O.A."/>
            <person name="Helgason E."/>
            <person name="Cer R.Z."/>
            <person name="Jiang L."/>
            <person name="Shores K.A."/>
            <person name="Fouts D.E."/>
            <person name="Tourasse N.J."/>
            <person name="Angiuoli S.V."/>
            <person name="Kolonay J.F."/>
            <person name="Nelson W.C."/>
            <person name="Kolstoe A.-B."/>
            <person name="Fraser C.M."/>
            <person name="Read T.D."/>
        </authorList>
    </citation>
    <scope>NUCLEOTIDE SEQUENCE [LARGE SCALE GENOMIC DNA]</scope>
    <source>
        <strain>ATCC 10987 / NRS 248</strain>
    </source>
</reference>
<dbReference type="EC" id="4.1.1.65" evidence="1"/>
<dbReference type="EMBL" id="AE017194">
    <property type="protein sequence ID" value="AAS43320.1"/>
    <property type="status" value="ALT_INIT"/>
    <property type="molecule type" value="Genomic_DNA"/>
</dbReference>
<dbReference type="SMR" id="Q730J7"/>
<dbReference type="KEGG" id="bca:BCE_4419"/>
<dbReference type="HOGENOM" id="CLU_029061_4_0_9"/>
<dbReference type="UniPathway" id="UPA00558">
    <property type="reaction ID" value="UER00616"/>
</dbReference>
<dbReference type="Proteomes" id="UP000002527">
    <property type="component" value="Chromosome"/>
</dbReference>
<dbReference type="GO" id="GO:0005886">
    <property type="term" value="C:plasma membrane"/>
    <property type="evidence" value="ECO:0007669"/>
    <property type="project" value="UniProtKB-SubCell"/>
</dbReference>
<dbReference type="GO" id="GO:0004609">
    <property type="term" value="F:phosphatidylserine decarboxylase activity"/>
    <property type="evidence" value="ECO:0007669"/>
    <property type="project" value="UniProtKB-UniRule"/>
</dbReference>
<dbReference type="GO" id="GO:0006646">
    <property type="term" value="P:phosphatidylethanolamine biosynthetic process"/>
    <property type="evidence" value="ECO:0007669"/>
    <property type="project" value="UniProtKB-UniRule"/>
</dbReference>
<dbReference type="HAMAP" id="MF_00662">
    <property type="entry name" value="PS_decarb_PSD_B_type1"/>
    <property type="match status" value="1"/>
</dbReference>
<dbReference type="InterPro" id="IPR003817">
    <property type="entry name" value="PS_Dcarbxylase"/>
</dbReference>
<dbReference type="InterPro" id="IPR033177">
    <property type="entry name" value="PSD-B"/>
</dbReference>
<dbReference type="InterPro" id="IPR033178">
    <property type="entry name" value="PSD_type1_pro"/>
</dbReference>
<dbReference type="NCBIfam" id="NF002853">
    <property type="entry name" value="PRK03140.1"/>
    <property type="match status" value="1"/>
</dbReference>
<dbReference type="NCBIfam" id="TIGR00163">
    <property type="entry name" value="PS_decarb"/>
    <property type="match status" value="1"/>
</dbReference>
<dbReference type="PANTHER" id="PTHR10067">
    <property type="entry name" value="PHOSPHATIDYLSERINE DECARBOXYLASE"/>
    <property type="match status" value="1"/>
</dbReference>
<dbReference type="PANTHER" id="PTHR10067:SF6">
    <property type="entry name" value="PHOSPHATIDYLSERINE DECARBOXYLASE PROENZYME, MITOCHONDRIAL"/>
    <property type="match status" value="1"/>
</dbReference>
<dbReference type="Pfam" id="PF02666">
    <property type="entry name" value="PS_Dcarbxylase"/>
    <property type="match status" value="1"/>
</dbReference>
<evidence type="ECO:0000255" key="1">
    <source>
        <dbReference type="HAMAP-Rule" id="MF_00662"/>
    </source>
</evidence>
<evidence type="ECO:0000305" key="2"/>
<accession>Q730J7</accession>
<organism>
    <name type="scientific">Bacillus cereus (strain ATCC 10987 / NRS 248)</name>
    <dbReference type="NCBI Taxonomy" id="222523"/>
    <lineage>
        <taxon>Bacteria</taxon>
        <taxon>Bacillati</taxon>
        <taxon>Bacillota</taxon>
        <taxon>Bacilli</taxon>
        <taxon>Bacillales</taxon>
        <taxon>Bacillaceae</taxon>
        <taxon>Bacillus</taxon>
        <taxon>Bacillus cereus group</taxon>
    </lineage>
</organism>
<protein>
    <recommendedName>
        <fullName evidence="1">Phosphatidylserine decarboxylase proenzyme</fullName>
        <ecNumber evidence="1">4.1.1.65</ecNumber>
    </recommendedName>
    <component>
        <recommendedName>
            <fullName evidence="1">Phosphatidylserine decarboxylase alpha chain</fullName>
        </recommendedName>
    </component>
    <component>
        <recommendedName>
            <fullName evidence="1">Phosphatidylserine decarboxylase beta chain</fullName>
        </recommendedName>
    </component>
</protein>
<keyword id="KW-1003">Cell membrane</keyword>
<keyword id="KW-0210">Decarboxylase</keyword>
<keyword id="KW-0444">Lipid biosynthesis</keyword>
<keyword id="KW-0443">Lipid metabolism</keyword>
<keyword id="KW-0456">Lyase</keyword>
<keyword id="KW-0472">Membrane</keyword>
<keyword id="KW-0594">Phospholipid biosynthesis</keyword>
<keyword id="KW-1208">Phospholipid metabolism</keyword>
<keyword id="KW-0670">Pyruvate</keyword>
<keyword id="KW-0865">Zymogen</keyword>
<feature type="chain" id="PRO_0000029621" description="Phosphatidylserine decarboxylase beta chain" evidence="1">
    <location>
        <begin position="1"/>
        <end position="225"/>
    </location>
</feature>
<feature type="chain" id="PRO_0000029622" description="Phosphatidylserine decarboxylase alpha chain" evidence="1">
    <location>
        <begin position="226"/>
        <end position="262"/>
    </location>
</feature>
<feature type="active site" description="Charge relay system; for autoendoproteolytic cleavage activity" evidence="1">
    <location>
        <position position="86"/>
    </location>
</feature>
<feature type="active site" description="Charge relay system; for autoendoproteolytic cleavage activity" evidence="1">
    <location>
        <position position="142"/>
    </location>
</feature>
<feature type="active site" description="Charge relay system; for autoendoproteolytic cleavage activity" evidence="1">
    <location>
        <position position="226"/>
    </location>
</feature>
<feature type="active site" description="Schiff-base intermediate with substrate; via pyruvic acid; for decarboxylase activity" evidence="1">
    <location>
        <position position="226"/>
    </location>
</feature>
<feature type="site" description="Cleavage (non-hydrolytic); by autocatalysis" evidence="1">
    <location>
        <begin position="225"/>
        <end position="226"/>
    </location>
</feature>
<feature type="modified residue" description="Pyruvic acid (Ser); by autocatalysis" evidence="1">
    <location>
        <position position="226"/>
    </location>
</feature>
<name>PSD_BACC1</name>
<comment type="function">
    <text evidence="1">Catalyzes the formation of phosphatidylethanolamine (PtdEtn) from phosphatidylserine (PtdSer).</text>
</comment>
<comment type="catalytic activity">
    <reaction evidence="1">
        <text>a 1,2-diacyl-sn-glycero-3-phospho-L-serine + H(+) = a 1,2-diacyl-sn-glycero-3-phosphoethanolamine + CO2</text>
        <dbReference type="Rhea" id="RHEA:20828"/>
        <dbReference type="ChEBI" id="CHEBI:15378"/>
        <dbReference type="ChEBI" id="CHEBI:16526"/>
        <dbReference type="ChEBI" id="CHEBI:57262"/>
        <dbReference type="ChEBI" id="CHEBI:64612"/>
        <dbReference type="EC" id="4.1.1.65"/>
    </reaction>
</comment>
<comment type="cofactor">
    <cofactor evidence="1">
        <name>pyruvate</name>
        <dbReference type="ChEBI" id="CHEBI:15361"/>
    </cofactor>
    <text evidence="1">Binds 1 pyruvoyl group covalently per subunit.</text>
</comment>
<comment type="pathway">
    <text evidence="1">Phospholipid metabolism; phosphatidylethanolamine biosynthesis; phosphatidylethanolamine from CDP-diacylglycerol: step 2/2.</text>
</comment>
<comment type="subunit">
    <text evidence="1">Heterodimer of a large membrane-associated beta subunit and a small pyruvoyl-containing alpha subunit.</text>
</comment>
<comment type="subcellular location">
    <subcellularLocation>
        <location evidence="1">Cell membrane</location>
        <topology evidence="1">Peripheral membrane protein</topology>
    </subcellularLocation>
</comment>
<comment type="PTM">
    <text evidence="1">Is synthesized initially as an inactive proenzyme. Formation of the active enzyme involves a self-maturation process in which the active site pyruvoyl group is generated from an internal serine residue via an autocatalytic post-translational modification. Two non-identical subunits are generated from the proenzyme in this reaction, and the pyruvate is formed at the N-terminus of the alpha chain, which is derived from the carboxyl end of the proenzyme. The autoendoproteolytic cleavage occurs by a canonical serine protease mechanism, in which the side chain hydroxyl group of the serine supplies its oxygen atom to form the C-terminus of the beta chain, while the remainder of the serine residue undergoes an oxidative deamination to produce ammonia and the pyruvoyl prosthetic group on the alpha chain. During this reaction, the Ser that is part of the protease active site of the proenzyme becomes the pyruvoyl prosthetic group, which constitutes an essential element of the active site of the mature decarboxylase.</text>
</comment>
<comment type="similarity">
    <text evidence="1">Belongs to the phosphatidylserine decarboxylase family. PSD-B subfamily. Prokaryotic type I sub-subfamily.</text>
</comment>
<comment type="sequence caution" evidence="2">
    <conflict type="erroneous initiation">
        <sequence resource="EMBL-CDS" id="AAS43320"/>
    </conflict>
</comment>